<gene>
    <name evidence="1" type="primary">lepA</name>
    <name type="ordered locus">SP_1200</name>
</gene>
<protein>
    <recommendedName>
        <fullName evidence="1">Elongation factor 4</fullName>
        <shortName evidence="1">EF-4</shortName>
        <ecNumber evidence="1">3.6.5.n1</ecNumber>
    </recommendedName>
    <alternativeName>
        <fullName evidence="1">Ribosomal back-translocase LepA</fullName>
    </alternativeName>
</protein>
<dbReference type="EC" id="3.6.5.n1" evidence="1"/>
<dbReference type="EMBL" id="AE005672">
    <property type="protein sequence ID" value="AAK75307.1"/>
    <property type="molecule type" value="Genomic_DNA"/>
</dbReference>
<dbReference type="PIR" id="B95139">
    <property type="entry name" value="B95139"/>
</dbReference>
<dbReference type="RefSeq" id="WP_001047212.1">
    <property type="nucleotide sequence ID" value="NZ_CP155539.1"/>
</dbReference>
<dbReference type="SMR" id="Q97QK5"/>
<dbReference type="PaxDb" id="170187-SP_1200"/>
<dbReference type="EnsemblBacteria" id="AAK75307">
    <property type="protein sequence ID" value="AAK75307"/>
    <property type="gene ID" value="SP_1200"/>
</dbReference>
<dbReference type="KEGG" id="spn:SP_1200"/>
<dbReference type="eggNOG" id="COG0481">
    <property type="taxonomic scope" value="Bacteria"/>
</dbReference>
<dbReference type="PhylomeDB" id="Q97QK5"/>
<dbReference type="BioCyc" id="SPNE170187:G1FZB-1216-MONOMER"/>
<dbReference type="Proteomes" id="UP000000585">
    <property type="component" value="Chromosome"/>
</dbReference>
<dbReference type="GO" id="GO:0005886">
    <property type="term" value="C:plasma membrane"/>
    <property type="evidence" value="ECO:0007669"/>
    <property type="project" value="UniProtKB-SubCell"/>
</dbReference>
<dbReference type="GO" id="GO:0005525">
    <property type="term" value="F:GTP binding"/>
    <property type="evidence" value="ECO:0007669"/>
    <property type="project" value="UniProtKB-UniRule"/>
</dbReference>
<dbReference type="GO" id="GO:0003924">
    <property type="term" value="F:GTPase activity"/>
    <property type="evidence" value="ECO:0007669"/>
    <property type="project" value="UniProtKB-UniRule"/>
</dbReference>
<dbReference type="GO" id="GO:0043022">
    <property type="term" value="F:ribosome binding"/>
    <property type="evidence" value="ECO:0007669"/>
    <property type="project" value="UniProtKB-UniRule"/>
</dbReference>
<dbReference type="GO" id="GO:0003746">
    <property type="term" value="F:translation elongation factor activity"/>
    <property type="evidence" value="ECO:0007669"/>
    <property type="project" value="UniProtKB-UniRule"/>
</dbReference>
<dbReference type="GO" id="GO:0045727">
    <property type="term" value="P:positive regulation of translation"/>
    <property type="evidence" value="ECO:0007669"/>
    <property type="project" value="UniProtKB-UniRule"/>
</dbReference>
<dbReference type="CDD" id="cd03699">
    <property type="entry name" value="EF4_II"/>
    <property type="match status" value="1"/>
</dbReference>
<dbReference type="CDD" id="cd16260">
    <property type="entry name" value="EF4_III"/>
    <property type="match status" value="1"/>
</dbReference>
<dbReference type="CDD" id="cd01890">
    <property type="entry name" value="LepA"/>
    <property type="match status" value="1"/>
</dbReference>
<dbReference type="CDD" id="cd03709">
    <property type="entry name" value="lepA_C"/>
    <property type="match status" value="1"/>
</dbReference>
<dbReference type="FunFam" id="3.40.50.300:FF:000078">
    <property type="entry name" value="Elongation factor 4"/>
    <property type="match status" value="1"/>
</dbReference>
<dbReference type="FunFam" id="2.40.30.10:FF:000015">
    <property type="entry name" value="Translation factor GUF1, mitochondrial"/>
    <property type="match status" value="1"/>
</dbReference>
<dbReference type="FunFam" id="3.30.70.240:FF:000007">
    <property type="entry name" value="Translation factor GUF1, mitochondrial"/>
    <property type="match status" value="1"/>
</dbReference>
<dbReference type="FunFam" id="3.30.70.2570:FF:000001">
    <property type="entry name" value="Translation factor GUF1, mitochondrial"/>
    <property type="match status" value="1"/>
</dbReference>
<dbReference type="FunFam" id="3.30.70.870:FF:000004">
    <property type="entry name" value="Translation factor GUF1, mitochondrial"/>
    <property type="match status" value="1"/>
</dbReference>
<dbReference type="Gene3D" id="3.30.70.240">
    <property type="match status" value="1"/>
</dbReference>
<dbReference type="Gene3D" id="3.30.70.2570">
    <property type="entry name" value="Elongation factor 4, C-terminal domain"/>
    <property type="match status" value="1"/>
</dbReference>
<dbReference type="Gene3D" id="3.30.70.870">
    <property type="entry name" value="Elongation Factor G (Translational Gtpase), domain 3"/>
    <property type="match status" value="1"/>
</dbReference>
<dbReference type="Gene3D" id="3.40.50.300">
    <property type="entry name" value="P-loop containing nucleotide triphosphate hydrolases"/>
    <property type="match status" value="1"/>
</dbReference>
<dbReference type="Gene3D" id="2.40.30.10">
    <property type="entry name" value="Translation factors"/>
    <property type="match status" value="1"/>
</dbReference>
<dbReference type="HAMAP" id="MF_00071">
    <property type="entry name" value="LepA"/>
    <property type="match status" value="1"/>
</dbReference>
<dbReference type="InterPro" id="IPR006297">
    <property type="entry name" value="EF-4"/>
</dbReference>
<dbReference type="InterPro" id="IPR035647">
    <property type="entry name" value="EFG_III/V"/>
</dbReference>
<dbReference type="InterPro" id="IPR000640">
    <property type="entry name" value="EFG_V-like"/>
</dbReference>
<dbReference type="InterPro" id="IPR004161">
    <property type="entry name" value="EFTu-like_2"/>
</dbReference>
<dbReference type="InterPro" id="IPR031157">
    <property type="entry name" value="G_TR_CS"/>
</dbReference>
<dbReference type="InterPro" id="IPR038363">
    <property type="entry name" value="LepA_C_sf"/>
</dbReference>
<dbReference type="InterPro" id="IPR013842">
    <property type="entry name" value="LepA_CTD"/>
</dbReference>
<dbReference type="InterPro" id="IPR035654">
    <property type="entry name" value="LepA_IV"/>
</dbReference>
<dbReference type="InterPro" id="IPR027417">
    <property type="entry name" value="P-loop_NTPase"/>
</dbReference>
<dbReference type="InterPro" id="IPR005225">
    <property type="entry name" value="Small_GTP-bd"/>
</dbReference>
<dbReference type="InterPro" id="IPR000795">
    <property type="entry name" value="T_Tr_GTP-bd_dom"/>
</dbReference>
<dbReference type="NCBIfam" id="TIGR01393">
    <property type="entry name" value="lepA"/>
    <property type="match status" value="1"/>
</dbReference>
<dbReference type="NCBIfam" id="TIGR00231">
    <property type="entry name" value="small_GTP"/>
    <property type="match status" value="1"/>
</dbReference>
<dbReference type="PANTHER" id="PTHR43512:SF4">
    <property type="entry name" value="TRANSLATION FACTOR GUF1 HOMOLOG, CHLOROPLASTIC"/>
    <property type="match status" value="1"/>
</dbReference>
<dbReference type="PANTHER" id="PTHR43512">
    <property type="entry name" value="TRANSLATION FACTOR GUF1-RELATED"/>
    <property type="match status" value="1"/>
</dbReference>
<dbReference type="Pfam" id="PF00679">
    <property type="entry name" value="EFG_C"/>
    <property type="match status" value="1"/>
</dbReference>
<dbReference type="Pfam" id="PF00009">
    <property type="entry name" value="GTP_EFTU"/>
    <property type="match status" value="1"/>
</dbReference>
<dbReference type="Pfam" id="PF03144">
    <property type="entry name" value="GTP_EFTU_D2"/>
    <property type="match status" value="1"/>
</dbReference>
<dbReference type="Pfam" id="PF06421">
    <property type="entry name" value="LepA_C"/>
    <property type="match status" value="1"/>
</dbReference>
<dbReference type="PRINTS" id="PR00315">
    <property type="entry name" value="ELONGATNFCT"/>
</dbReference>
<dbReference type="SMART" id="SM00838">
    <property type="entry name" value="EFG_C"/>
    <property type="match status" value="1"/>
</dbReference>
<dbReference type="SUPFAM" id="SSF54980">
    <property type="entry name" value="EF-G C-terminal domain-like"/>
    <property type="match status" value="2"/>
</dbReference>
<dbReference type="SUPFAM" id="SSF52540">
    <property type="entry name" value="P-loop containing nucleoside triphosphate hydrolases"/>
    <property type="match status" value="1"/>
</dbReference>
<dbReference type="PROSITE" id="PS00301">
    <property type="entry name" value="G_TR_1"/>
    <property type="match status" value="1"/>
</dbReference>
<dbReference type="PROSITE" id="PS51722">
    <property type="entry name" value="G_TR_2"/>
    <property type="match status" value="1"/>
</dbReference>
<accession>Q97QK5</accession>
<proteinExistence type="inferred from homology"/>
<comment type="function">
    <text evidence="1">Required for accurate and efficient protein synthesis under certain stress conditions. May act as a fidelity factor of the translation reaction, by catalyzing a one-codon backward translocation of tRNAs on improperly translocated ribosomes. Back-translocation proceeds from a post-translocation (POST) complex to a pre-translocation (PRE) complex, thus giving elongation factor G a second chance to translocate the tRNAs correctly. Binds to ribosomes in a GTP-dependent manner.</text>
</comment>
<comment type="catalytic activity">
    <reaction evidence="1">
        <text>GTP + H2O = GDP + phosphate + H(+)</text>
        <dbReference type="Rhea" id="RHEA:19669"/>
        <dbReference type="ChEBI" id="CHEBI:15377"/>
        <dbReference type="ChEBI" id="CHEBI:15378"/>
        <dbReference type="ChEBI" id="CHEBI:37565"/>
        <dbReference type="ChEBI" id="CHEBI:43474"/>
        <dbReference type="ChEBI" id="CHEBI:58189"/>
        <dbReference type="EC" id="3.6.5.n1"/>
    </reaction>
</comment>
<comment type="subcellular location">
    <subcellularLocation>
        <location evidence="1">Cell membrane</location>
        <topology evidence="1">Peripheral membrane protein</topology>
        <orientation evidence="1">Cytoplasmic side</orientation>
    </subcellularLocation>
</comment>
<comment type="similarity">
    <text evidence="1">Belongs to the TRAFAC class translation factor GTPase superfamily. Classic translation factor GTPase family. LepA subfamily.</text>
</comment>
<organism>
    <name type="scientific">Streptococcus pneumoniae serotype 4 (strain ATCC BAA-334 / TIGR4)</name>
    <dbReference type="NCBI Taxonomy" id="170187"/>
    <lineage>
        <taxon>Bacteria</taxon>
        <taxon>Bacillati</taxon>
        <taxon>Bacillota</taxon>
        <taxon>Bacilli</taxon>
        <taxon>Lactobacillales</taxon>
        <taxon>Streptococcaceae</taxon>
        <taxon>Streptococcus</taxon>
    </lineage>
</organism>
<sequence length="607" mass="67695">MNLEELKKRQEKIRNFSIIAHIDHGKSTLADRILEKTETVSSREMQAQLLDSMELERERGITIKLNAIELNYTAKDGETYIFHLIDTPGHVDFTYEVSRSLAACEGAILVVDAAQGIEAQTLANVYLALDNDLEIMPIINKIDLPAADPERVRTEIEDVIGLDASEAVLASAKAGIGIEEILEQIVEKVPAPTGDVTAPLKALIFDSVYDAYRGVILQVRVMDGVVKPGDKIQLMSNSKTFDVAEVGIFTPKAVGRDFLATGDVGYIAASIKTVQDTRVGDTVTLATNPAAEPLHGYKQMNPMVFAGLYPIESNKYNDLREALEKLQLNDASLQFEPETSQALGFGFRCGFLGLLHMDVIQERLEREFNIDLIMTAPSVIYKVNLTDGESMDVSNPSEFPDPTKIATIEEPYVKAQIMVPQEFVGAVMELAQRKRGDFVTMDYIDDNRVNVIYQIPLAEIVFDFFDKLKSSTRGYASFDYELSEYRPSKLVKMDILLNGDKVDALSFIVHKDFAYERGKLIVDKLKKIIPRQQFEVPIQAAIGHKIVARTDIKALRKNVLAKCYGGDVSRKRKLLEKQKAGKKRMKSIGSVEVPQEAFLSVLSMDEE</sequence>
<feature type="chain" id="PRO_0000176353" description="Elongation factor 4">
    <location>
        <begin position="1"/>
        <end position="607"/>
    </location>
</feature>
<feature type="domain" description="tr-type G">
    <location>
        <begin position="11"/>
        <end position="193"/>
    </location>
</feature>
<feature type="binding site" evidence="1">
    <location>
        <begin position="23"/>
        <end position="28"/>
    </location>
    <ligand>
        <name>GTP</name>
        <dbReference type="ChEBI" id="CHEBI:37565"/>
    </ligand>
</feature>
<feature type="binding site" evidence="1">
    <location>
        <begin position="140"/>
        <end position="143"/>
    </location>
    <ligand>
        <name>GTP</name>
        <dbReference type="ChEBI" id="CHEBI:37565"/>
    </ligand>
</feature>
<keyword id="KW-1003">Cell membrane</keyword>
<keyword id="KW-0342">GTP-binding</keyword>
<keyword id="KW-0378">Hydrolase</keyword>
<keyword id="KW-0472">Membrane</keyword>
<keyword id="KW-0547">Nucleotide-binding</keyword>
<keyword id="KW-0648">Protein biosynthesis</keyword>
<keyword id="KW-1185">Reference proteome</keyword>
<reference key="1">
    <citation type="journal article" date="2001" name="Science">
        <title>Complete genome sequence of a virulent isolate of Streptococcus pneumoniae.</title>
        <authorList>
            <person name="Tettelin H."/>
            <person name="Nelson K.E."/>
            <person name="Paulsen I.T."/>
            <person name="Eisen J.A."/>
            <person name="Read T.D."/>
            <person name="Peterson S.N."/>
            <person name="Heidelberg J.F."/>
            <person name="DeBoy R.T."/>
            <person name="Haft D.H."/>
            <person name="Dodson R.J."/>
            <person name="Durkin A.S."/>
            <person name="Gwinn M.L."/>
            <person name="Kolonay J.F."/>
            <person name="Nelson W.C."/>
            <person name="Peterson J.D."/>
            <person name="Umayam L.A."/>
            <person name="White O."/>
            <person name="Salzberg S.L."/>
            <person name="Lewis M.R."/>
            <person name="Radune D."/>
            <person name="Holtzapple E.K."/>
            <person name="Khouri H.M."/>
            <person name="Wolf A.M."/>
            <person name="Utterback T.R."/>
            <person name="Hansen C.L."/>
            <person name="McDonald L.A."/>
            <person name="Feldblyum T.V."/>
            <person name="Angiuoli S.V."/>
            <person name="Dickinson T."/>
            <person name="Hickey E.K."/>
            <person name="Holt I.E."/>
            <person name="Loftus B.J."/>
            <person name="Yang F."/>
            <person name="Smith H.O."/>
            <person name="Venter J.C."/>
            <person name="Dougherty B.A."/>
            <person name="Morrison D.A."/>
            <person name="Hollingshead S.K."/>
            <person name="Fraser C.M."/>
        </authorList>
    </citation>
    <scope>NUCLEOTIDE SEQUENCE [LARGE SCALE GENOMIC DNA]</scope>
    <source>
        <strain>ATCC BAA-334 / TIGR4</strain>
    </source>
</reference>
<evidence type="ECO:0000255" key="1">
    <source>
        <dbReference type="HAMAP-Rule" id="MF_00071"/>
    </source>
</evidence>
<name>LEPA_STRPN</name>